<proteinExistence type="inferred from homology"/>
<protein>
    <recommendedName>
        <fullName evidence="1">tRNA uridine(34) hydroxylase</fullName>
        <ecNumber evidence="1">1.14.-.-</ecNumber>
    </recommendedName>
    <alternativeName>
        <fullName evidence="1">tRNA hydroxylation protein O</fullName>
    </alternativeName>
</protein>
<organism>
    <name type="scientific">Bacillus subtilis (strain 168)</name>
    <dbReference type="NCBI Taxonomy" id="224308"/>
    <lineage>
        <taxon>Bacteria</taxon>
        <taxon>Bacillati</taxon>
        <taxon>Bacillota</taxon>
        <taxon>Bacilli</taxon>
        <taxon>Bacillales</taxon>
        <taxon>Bacillaceae</taxon>
        <taxon>Bacillus</taxon>
    </lineage>
</organism>
<reference key="1">
    <citation type="submission" date="1997-07" db="EMBL/GenBank/DDBJ databases">
        <title>Sequence analysis of the 70kb region between 17 and 23 degree of the Bacillus subtilis chromosome.</title>
        <authorList>
            <person name="Haga K."/>
            <person name="Liu H."/>
            <person name="Yasumoto K."/>
            <person name="Takahashi H."/>
            <person name="Yoshikawa H."/>
        </authorList>
    </citation>
    <scope>NUCLEOTIDE SEQUENCE [GENOMIC DNA]</scope>
    <source>
        <strain>168</strain>
    </source>
</reference>
<reference key="2">
    <citation type="journal article" date="1997" name="Nature">
        <title>The complete genome sequence of the Gram-positive bacterium Bacillus subtilis.</title>
        <authorList>
            <person name="Kunst F."/>
            <person name="Ogasawara N."/>
            <person name="Moszer I."/>
            <person name="Albertini A.M."/>
            <person name="Alloni G."/>
            <person name="Azevedo V."/>
            <person name="Bertero M.G."/>
            <person name="Bessieres P."/>
            <person name="Bolotin A."/>
            <person name="Borchert S."/>
            <person name="Borriss R."/>
            <person name="Boursier L."/>
            <person name="Brans A."/>
            <person name="Braun M."/>
            <person name="Brignell S.C."/>
            <person name="Bron S."/>
            <person name="Brouillet S."/>
            <person name="Bruschi C.V."/>
            <person name="Caldwell B."/>
            <person name="Capuano V."/>
            <person name="Carter N.M."/>
            <person name="Choi S.-K."/>
            <person name="Codani J.-J."/>
            <person name="Connerton I.F."/>
            <person name="Cummings N.J."/>
            <person name="Daniel R.A."/>
            <person name="Denizot F."/>
            <person name="Devine K.M."/>
            <person name="Duesterhoeft A."/>
            <person name="Ehrlich S.D."/>
            <person name="Emmerson P.T."/>
            <person name="Entian K.-D."/>
            <person name="Errington J."/>
            <person name="Fabret C."/>
            <person name="Ferrari E."/>
            <person name="Foulger D."/>
            <person name="Fritz C."/>
            <person name="Fujita M."/>
            <person name="Fujita Y."/>
            <person name="Fuma S."/>
            <person name="Galizzi A."/>
            <person name="Galleron N."/>
            <person name="Ghim S.-Y."/>
            <person name="Glaser P."/>
            <person name="Goffeau A."/>
            <person name="Golightly E.J."/>
            <person name="Grandi G."/>
            <person name="Guiseppi G."/>
            <person name="Guy B.J."/>
            <person name="Haga K."/>
            <person name="Haiech J."/>
            <person name="Harwood C.R."/>
            <person name="Henaut A."/>
            <person name="Hilbert H."/>
            <person name="Holsappel S."/>
            <person name="Hosono S."/>
            <person name="Hullo M.-F."/>
            <person name="Itaya M."/>
            <person name="Jones L.-M."/>
            <person name="Joris B."/>
            <person name="Karamata D."/>
            <person name="Kasahara Y."/>
            <person name="Klaerr-Blanchard M."/>
            <person name="Klein C."/>
            <person name="Kobayashi Y."/>
            <person name="Koetter P."/>
            <person name="Koningstein G."/>
            <person name="Krogh S."/>
            <person name="Kumano M."/>
            <person name="Kurita K."/>
            <person name="Lapidus A."/>
            <person name="Lardinois S."/>
            <person name="Lauber J."/>
            <person name="Lazarevic V."/>
            <person name="Lee S.-M."/>
            <person name="Levine A."/>
            <person name="Liu H."/>
            <person name="Masuda S."/>
            <person name="Mauel C."/>
            <person name="Medigue C."/>
            <person name="Medina N."/>
            <person name="Mellado R.P."/>
            <person name="Mizuno M."/>
            <person name="Moestl D."/>
            <person name="Nakai S."/>
            <person name="Noback M."/>
            <person name="Noone D."/>
            <person name="O'Reilly M."/>
            <person name="Ogawa K."/>
            <person name="Ogiwara A."/>
            <person name="Oudega B."/>
            <person name="Park S.-H."/>
            <person name="Parro V."/>
            <person name="Pohl T.M."/>
            <person name="Portetelle D."/>
            <person name="Porwollik S."/>
            <person name="Prescott A.M."/>
            <person name="Presecan E."/>
            <person name="Pujic P."/>
            <person name="Purnelle B."/>
            <person name="Rapoport G."/>
            <person name="Rey M."/>
            <person name="Reynolds S."/>
            <person name="Rieger M."/>
            <person name="Rivolta C."/>
            <person name="Rocha E."/>
            <person name="Roche B."/>
            <person name="Rose M."/>
            <person name="Sadaie Y."/>
            <person name="Sato T."/>
            <person name="Scanlan E."/>
            <person name="Schleich S."/>
            <person name="Schroeter R."/>
            <person name="Scoffone F."/>
            <person name="Sekiguchi J."/>
            <person name="Sekowska A."/>
            <person name="Seror S.J."/>
            <person name="Serror P."/>
            <person name="Shin B.-S."/>
            <person name="Soldo B."/>
            <person name="Sorokin A."/>
            <person name="Tacconi E."/>
            <person name="Takagi T."/>
            <person name="Takahashi H."/>
            <person name="Takemaru K."/>
            <person name="Takeuchi M."/>
            <person name="Tamakoshi A."/>
            <person name="Tanaka T."/>
            <person name="Terpstra P."/>
            <person name="Tognoni A."/>
            <person name="Tosato V."/>
            <person name="Uchiyama S."/>
            <person name="Vandenbol M."/>
            <person name="Vannier F."/>
            <person name="Vassarotti A."/>
            <person name="Viari A."/>
            <person name="Wambutt R."/>
            <person name="Wedler E."/>
            <person name="Wedler H."/>
            <person name="Weitzenegger T."/>
            <person name="Winters P."/>
            <person name="Wipat A."/>
            <person name="Yamamoto H."/>
            <person name="Yamane K."/>
            <person name="Yasumoto K."/>
            <person name="Yata K."/>
            <person name="Yoshida K."/>
            <person name="Yoshikawa H.-F."/>
            <person name="Zumstein E."/>
            <person name="Yoshikawa H."/>
            <person name="Danchin A."/>
        </authorList>
    </citation>
    <scope>NUCLEOTIDE SEQUENCE [LARGE SCALE GENOMIC DNA]</scope>
    <source>
        <strain>168</strain>
    </source>
</reference>
<reference key="3">
    <citation type="journal article" date="2019" name="Nat. Commun.">
        <title>Dual pathways of tRNA hydroxylation ensure efficient translation by expanding decoding capability.</title>
        <authorList>
            <person name="Sakai Y."/>
            <person name="Kimura S."/>
            <person name="Suzuki T."/>
        </authorList>
    </citation>
    <scope>FUNCTION</scope>
</reference>
<keyword id="KW-0560">Oxidoreductase</keyword>
<keyword id="KW-1185">Reference proteome</keyword>
<keyword id="KW-0819">tRNA processing</keyword>
<gene>
    <name evidence="1" type="primary">trhO</name>
    <name type="synonym">ybfQ</name>
    <name type="ordered locus">BSU02330</name>
</gene>
<feature type="chain" id="PRO_0000161444" description="tRNA uridine(34) hydroxylase">
    <location>
        <begin position="1"/>
        <end position="322"/>
    </location>
</feature>
<feature type="domain" description="Rhodanese" evidence="1">
    <location>
        <begin position="125"/>
        <end position="219"/>
    </location>
</feature>
<feature type="active site" description="Cysteine persulfide intermediate" evidence="1">
    <location>
        <position position="179"/>
    </location>
</feature>
<comment type="function">
    <text evidence="2">Catalyzes oxygen-dependent 5-hydroxyuridine (ho5U) modification at position 34 in tRNAs.</text>
</comment>
<comment type="catalytic activity">
    <reaction evidence="1">
        <text>uridine(34) in tRNA + AH2 + O2 = 5-hydroxyuridine(34) in tRNA + A + H2O</text>
        <dbReference type="Rhea" id="RHEA:64224"/>
        <dbReference type="Rhea" id="RHEA-COMP:11727"/>
        <dbReference type="Rhea" id="RHEA-COMP:13381"/>
        <dbReference type="ChEBI" id="CHEBI:13193"/>
        <dbReference type="ChEBI" id="CHEBI:15377"/>
        <dbReference type="ChEBI" id="CHEBI:15379"/>
        <dbReference type="ChEBI" id="CHEBI:17499"/>
        <dbReference type="ChEBI" id="CHEBI:65315"/>
        <dbReference type="ChEBI" id="CHEBI:136877"/>
    </reaction>
</comment>
<comment type="similarity">
    <text evidence="1">Belongs to the TrhO family.</text>
</comment>
<evidence type="ECO:0000255" key="1">
    <source>
        <dbReference type="HAMAP-Rule" id="MF_00469"/>
    </source>
</evidence>
<evidence type="ECO:0000305" key="2">
    <source>
    </source>
</evidence>
<accession>O31457</accession>
<dbReference type="EC" id="1.14.-.-" evidence="1"/>
<dbReference type="EMBL" id="AB006424">
    <property type="protein sequence ID" value="BAA33130.1"/>
    <property type="molecule type" value="Genomic_DNA"/>
</dbReference>
<dbReference type="EMBL" id="AL009126">
    <property type="protein sequence ID" value="CAB12027.1"/>
    <property type="molecule type" value="Genomic_DNA"/>
</dbReference>
<dbReference type="PIR" id="C69750">
    <property type="entry name" value="C69750"/>
</dbReference>
<dbReference type="RefSeq" id="NP_388115.1">
    <property type="nucleotide sequence ID" value="NC_000964.3"/>
</dbReference>
<dbReference type="RefSeq" id="WP_003246287.1">
    <property type="nucleotide sequence ID" value="NZ_OZ025638.1"/>
</dbReference>
<dbReference type="SMR" id="O31457"/>
<dbReference type="FunCoup" id="O31457">
    <property type="interactions" value="397"/>
</dbReference>
<dbReference type="STRING" id="224308.BSU02330"/>
<dbReference type="PaxDb" id="224308-BSU02330"/>
<dbReference type="DNASU" id="938426"/>
<dbReference type="EnsemblBacteria" id="CAB12027">
    <property type="protein sequence ID" value="CAB12027"/>
    <property type="gene ID" value="BSU_02330"/>
</dbReference>
<dbReference type="GeneID" id="938426"/>
<dbReference type="KEGG" id="bsu:BSU02330"/>
<dbReference type="PATRIC" id="fig|224308.179.peg.239"/>
<dbReference type="eggNOG" id="COG1054">
    <property type="taxonomic scope" value="Bacteria"/>
</dbReference>
<dbReference type="InParanoid" id="O31457"/>
<dbReference type="OrthoDB" id="9778326at2"/>
<dbReference type="PhylomeDB" id="O31457"/>
<dbReference type="BioCyc" id="BSUB:BSU02330-MONOMER"/>
<dbReference type="Proteomes" id="UP000001570">
    <property type="component" value="Chromosome"/>
</dbReference>
<dbReference type="GO" id="GO:0016705">
    <property type="term" value="F:oxidoreductase activity, acting on paired donors, with incorporation or reduction of molecular oxygen"/>
    <property type="evidence" value="ECO:0007669"/>
    <property type="project" value="UniProtKB-UniRule"/>
</dbReference>
<dbReference type="GO" id="GO:0006400">
    <property type="term" value="P:tRNA modification"/>
    <property type="evidence" value="ECO:0007669"/>
    <property type="project" value="UniProtKB-UniRule"/>
</dbReference>
<dbReference type="CDD" id="cd01518">
    <property type="entry name" value="RHOD_YceA"/>
    <property type="match status" value="1"/>
</dbReference>
<dbReference type="Gene3D" id="3.30.70.100">
    <property type="match status" value="1"/>
</dbReference>
<dbReference type="Gene3D" id="3.40.250.10">
    <property type="entry name" value="Rhodanese-like domain"/>
    <property type="match status" value="1"/>
</dbReference>
<dbReference type="HAMAP" id="MF_00469">
    <property type="entry name" value="TrhO"/>
    <property type="match status" value="1"/>
</dbReference>
<dbReference type="InterPro" id="IPR001763">
    <property type="entry name" value="Rhodanese-like_dom"/>
</dbReference>
<dbReference type="InterPro" id="IPR036873">
    <property type="entry name" value="Rhodanese-like_dom_sf"/>
</dbReference>
<dbReference type="InterPro" id="IPR022111">
    <property type="entry name" value="Rhodanese_C"/>
</dbReference>
<dbReference type="InterPro" id="IPR020936">
    <property type="entry name" value="TrhO"/>
</dbReference>
<dbReference type="InterPro" id="IPR040503">
    <property type="entry name" value="TRHO_N"/>
</dbReference>
<dbReference type="NCBIfam" id="NF001135">
    <property type="entry name" value="PRK00142.1-3"/>
    <property type="match status" value="1"/>
</dbReference>
<dbReference type="PANTHER" id="PTHR43268:SF3">
    <property type="entry name" value="RHODANESE-LIKE DOMAIN-CONTAINING PROTEIN 7-RELATED"/>
    <property type="match status" value="1"/>
</dbReference>
<dbReference type="PANTHER" id="PTHR43268">
    <property type="entry name" value="THIOSULFATE SULFURTRANSFERASE/RHODANESE-LIKE DOMAIN-CONTAINING PROTEIN 2"/>
    <property type="match status" value="1"/>
</dbReference>
<dbReference type="Pfam" id="PF00581">
    <property type="entry name" value="Rhodanese"/>
    <property type="match status" value="1"/>
</dbReference>
<dbReference type="Pfam" id="PF12368">
    <property type="entry name" value="Rhodanese_C"/>
    <property type="match status" value="1"/>
</dbReference>
<dbReference type="Pfam" id="PF17773">
    <property type="entry name" value="UPF0176_N"/>
    <property type="match status" value="1"/>
</dbReference>
<dbReference type="SMART" id="SM00450">
    <property type="entry name" value="RHOD"/>
    <property type="match status" value="1"/>
</dbReference>
<dbReference type="SUPFAM" id="SSF52821">
    <property type="entry name" value="Rhodanese/Cell cycle control phosphatase"/>
    <property type="match status" value="1"/>
</dbReference>
<dbReference type="PROSITE" id="PS50206">
    <property type="entry name" value="RHODANESE_3"/>
    <property type="match status" value="1"/>
</dbReference>
<name>TRHO_BACSU</name>
<sequence>MEKQYRVLLYYKYVPIEDPEAFREQHLAFCKELGLLGRILVSSEGINGTVSGTVEQTEKYMETMKADPRFADMVFKIDEAEGHAFKKIFVRHKKELVTLRLEDDVDPNETTGQHLKPAEFYEKMQDPNTIVIDARNDYEYDLGHFRGAVRPDIEAFRELPEWIEEHKDMLEGKKILTYCTGGVRCEKFSGWLVKQGFEDVAQLDGGIVTYGKDPEVQGKLWDGQCYVFDERISVPVNRVEHVIVGKDYFTGEPCERYVNCANPSCNKKMICTPENEYKYMRSCSHECRTNPRNLYVKEHNMTEEEVNARLAAIETEDHAAAE</sequence>